<keyword id="KW-0067">ATP-binding</keyword>
<keyword id="KW-0227">DNA damage</keyword>
<keyword id="KW-0234">DNA repair</keyword>
<keyword id="KW-0238">DNA-binding</keyword>
<keyword id="KW-0347">Helicase</keyword>
<keyword id="KW-0378">Hydrolase</keyword>
<keyword id="KW-0413">Isomerase</keyword>
<keyword id="KW-0547">Nucleotide-binding</keyword>
<keyword id="KW-0539">Nucleus</keyword>
<keyword id="KW-1185">Reference proteome</keyword>
<sequence length="798" mass="90348">MGPPKKSRKDRSGGDKFGKKRRAEDEAFTQLVDDNDSLDATESEGIPGAASKNAETNDEQINTDEYGAKDYRSQMQLRPDHGNRPLWVAPNGHVFLESFSPVYKHAHDFLIAISEPVCRPEHIHEYKLTAYSLYAAVSVGLQTHDIVEYLKRLSKTSIPEGILEFIRLCTLSYGKVKLVLKHNKYFIESPHPEVLQKLLKDPVIQKCRLIRSEGEDFIQGTLDGKAITQFGTKLPPGATDKPTPDPAAAAGADGTTAVPEDITDFYEKIDKEEEDEDEANLKTVSFEVAQEKIEVIQKRCIEIEHPLLAEYDFRNDTNNPDINIDLKPAAVLRPYQEKSLRKMFGNGRARSGVIVLPCGAGKSLVGVTACCTVRKRALVLCNSGVSVEQWKQQFKMWSTADDSMICRFTSEAKDKPMGCGILVTTYSMITHTQKRSWEAEQTMRWLQEQEWGIMVLDEVHTIPAKMFRRVLTIVQSHCKLGLTATLLREDDKIADLNFLIGPKLYEANWLELQKKGYIARVQCAEVWCPMSPEFYREYLTTKTSKKMLLYVMNPSKFRSCQFLIKYHEQRGDKTIVFSDNVFALKHYAIKMNKPFIYGPTSQNERIQILQNFKFNSKVNTIFVSKVADTSFDLPEANVLIQISSHGGSRRQEAQRLGRILRAKKGAIAEEYNAFFYTLVSQDTMEMSYSRKRQRFLVNQGYSYKVITHLKGMDTDSDLMYGTQEEQGQLLQLVLSASDLDCEDEKLPGEPGYRPSGSGGAVRRVGGLSSMSGGDDAIYYEHRKKNIGSVHPLFKKFRG</sequence>
<feature type="chain" id="PRO_0000101990" description="General transcription and DNA repair factor IIH helicase/translocase subunit XPB">
    <location>
        <begin position="1"/>
        <end position="798"/>
    </location>
</feature>
<feature type="domain" description="Helicase ATP-binding" evidence="3">
    <location>
        <begin position="343"/>
        <end position="504"/>
    </location>
</feature>
<feature type="domain" description="Helicase C-terminal" evidence="4">
    <location>
        <begin position="558"/>
        <end position="713"/>
    </location>
</feature>
<feature type="region of interest" description="Disordered" evidence="5">
    <location>
        <begin position="1"/>
        <end position="62"/>
    </location>
</feature>
<feature type="region of interest" description="Disordered" evidence="5">
    <location>
        <begin position="235"/>
        <end position="254"/>
    </location>
</feature>
<feature type="region of interest" description="Disordered" evidence="5">
    <location>
        <begin position="746"/>
        <end position="765"/>
    </location>
</feature>
<feature type="short sequence motif" description="Nuclear localization signal" evidence="2">
    <location>
        <begin position="6"/>
        <end position="22"/>
    </location>
</feature>
<feature type="short sequence motif" description="DEVH box">
    <location>
        <begin position="457"/>
        <end position="460"/>
    </location>
</feature>
<feature type="compositionally biased region" description="Basic and acidic residues" evidence="5">
    <location>
        <begin position="10"/>
        <end position="25"/>
    </location>
</feature>
<feature type="compositionally biased region" description="Acidic residues" evidence="5">
    <location>
        <begin position="33"/>
        <end position="42"/>
    </location>
</feature>
<feature type="binding site" evidence="3">
    <location>
        <begin position="360"/>
        <end position="367"/>
    </location>
    <ligand>
        <name>ATP</name>
        <dbReference type="ChEBI" id="CHEBI:30616"/>
    </ligand>
</feature>
<feature type="sequence conflict" description="In Ref. 2; AAA74931." evidence="6" ref="2">
    <original>DK</original>
    <variation>AE</variation>
    <location>
        <begin position="15"/>
        <end position="16"/>
    </location>
</feature>
<feature type="sequence conflict" description="In Ref. 1; AAA12421/CAA48386 and 2; AAA74931." evidence="6" ref="1 2">
    <original>P</original>
    <variation>A</variation>
    <location>
        <position position="244"/>
    </location>
</feature>
<feature type="sequence conflict" description="In Ref. 1; AAA12421/CAA48386 and 2; AAA74931." evidence="6" ref="1 2">
    <original>A</original>
    <variation>AVVAA</variation>
    <location>
        <position position="252"/>
    </location>
</feature>
<feature type="sequence conflict" description="In Ref. 2; AAA74931." evidence="6" ref="2">
    <original>V</original>
    <variation>G</variation>
    <location>
        <position position="258"/>
    </location>
</feature>
<feature type="sequence conflict" description="In Ref. 5; AAK93399." evidence="6" ref="5">
    <original>D</original>
    <variation>V</variation>
    <location>
        <position position="312"/>
    </location>
</feature>
<feature type="sequence conflict" description="In Ref. 2; AAA74931." evidence="6" ref="2">
    <original>V</original>
    <variation>C</variation>
    <location>
        <position position="521"/>
    </location>
</feature>
<feature type="sequence conflict" description="In Ref. 2; AAA74931." evidence="6" ref="2">
    <location>
        <position position="552"/>
    </location>
</feature>
<feature type="sequence conflict" description="In Ref. 2; AAA74931." evidence="6" ref="2">
    <original>G</original>
    <variation>V</variation>
    <location>
        <position position="657"/>
    </location>
</feature>
<feature type="sequence conflict" description="In Ref. 2; AAA74931." evidence="6" ref="2">
    <original>Q</original>
    <variation>H</variation>
    <location>
        <position position="693"/>
    </location>
</feature>
<feature type="sequence conflict" description="In Ref. 2; AAA74931." evidence="6" ref="2">
    <original>YS</original>
    <variation>IC</variation>
    <location>
        <begin position="701"/>
        <end position="702"/>
    </location>
</feature>
<feature type="sequence conflict" description="In Ref. 1; AAA12421/CAA48386 and 2; AAA74931." evidence="6" ref="1 2">
    <original>A</original>
    <variation>I</variation>
    <location>
        <position position="760"/>
    </location>
</feature>
<organism>
    <name type="scientific">Drosophila melanogaster</name>
    <name type="common">Fruit fly</name>
    <dbReference type="NCBI Taxonomy" id="7227"/>
    <lineage>
        <taxon>Eukaryota</taxon>
        <taxon>Metazoa</taxon>
        <taxon>Ecdysozoa</taxon>
        <taxon>Arthropoda</taxon>
        <taxon>Hexapoda</taxon>
        <taxon>Insecta</taxon>
        <taxon>Pterygota</taxon>
        <taxon>Neoptera</taxon>
        <taxon>Endopterygota</taxon>
        <taxon>Diptera</taxon>
        <taxon>Brachycera</taxon>
        <taxon>Muscomorpha</taxon>
        <taxon>Ephydroidea</taxon>
        <taxon>Drosophilidae</taxon>
        <taxon>Drosophila</taxon>
        <taxon>Sophophora</taxon>
    </lineage>
</organism>
<accession>Q02870</accession>
<accession>Q1LZ27</accession>
<accession>Q2PJB4</accession>
<accession>Q960M8</accession>
<accession>Q9VTA2</accession>
<protein>
    <recommendedName>
        <fullName>General transcription and DNA repair factor IIH helicase/translocase subunit XPB</fullName>
        <shortName>TFIIH subunit XPB</shortName>
        <ecNumber evidence="6">5.6.2.4</ecNumber>
    </recommendedName>
    <alternativeName>
        <fullName>ATP-dependent DNA helicase hay</fullName>
    </alternativeName>
    <alternativeName>
        <fullName evidence="6">DNA 3'-5' helicase/translocase XPB</fullName>
    </alternativeName>
    <alternativeName>
        <fullName>DNA excision repair protein haywire</fullName>
    </alternativeName>
    <alternativeName>
        <fullName>ERCC-3 homolog protein</fullName>
    </alternativeName>
    <alternativeName>
        <fullName>ERCC3Dm</fullName>
    </alternativeName>
</protein>
<gene>
    <name type="primary">hay</name>
    <name type="synonym">ERCC3</name>
    <name type="ORF">CG8019</name>
</gene>
<evidence type="ECO:0000250" key="1">
    <source>
        <dbReference type="UniProtKB" id="P19447"/>
    </source>
</evidence>
<evidence type="ECO:0000255" key="2"/>
<evidence type="ECO:0000255" key="3">
    <source>
        <dbReference type="PROSITE-ProRule" id="PRU00541"/>
    </source>
</evidence>
<evidence type="ECO:0000255" key="4">
    <source>
        <dbReference type="PROSITE-ProRule" id="PRU00542"/>
    </source>
</evidence>
<evidence type="ECO:0000256" key="5">
    <source>
        <dbReference type="SAM" id="MobiDB-lite"/>
    </source>
</evidence>
<evidence type="ECO:0000305" key="6"/>
<comment type="function">
    <text evidence="1">ATP-dependent 3'-5' DNA helicase/translocase; binds dsDNA rather than ssDNA, unzipping it in a translocase rather than classical helicase activity. Component of the general transcription and DNA repair factor IIH (TFIIH) core complex. When complexed to CDK-activating kinase (CAK), involved in RNA transcription by RNA polymerase II. The ATPase activity of XPB/ERCC3, but not its helicase activity, is required for DNA opening; it may wrap around the damaged DNA wedging it open, causing localized melting and twisting that allows XPD/ERCC2 helicase to anchor. The ATP-dependent helicase activity of XPB/ERCC3 may be required for promoter escape. Also involved in transcription-coupled nucleotide excision repair (NER) of damaged DNA. In NER, TFIIH acts by opening DNA around the lesion to allow the excision of the damaged oligonucleotide and its replacement by a new DNA fragment. The structure of the TFIIH transcription complex differs from the NER-TFIIH complex; large movements by XPD/ERCC2 and XPB/ERCC3 are stabilized by XPA.</text>
</comment>
<comment type="catalytic activity">
    <reaction evidence="1">
        <text>Couples ATP hydrolysis with the unwinding of duplex DNA by translocating in the 3'-5' direction.</text>
        <dbReference type="EC" id="5.6.2.4"/>
    </reaction>
</comment>
<comment type="catalytic activity">
    <reaction evidence="1">
        <text>ATP + H2O = ADP + phosphate + H(+)</text>
        <dbReference type="Rhea" id="RHEA:13065"/>
        <dbReference type="ChEBI" id="CHEBI:15377"/>
        <dbReference type="ChEBI" id="CHEBI:15378"/>
        <dbReference type="ChEBI" id="CHEBI:30616"/>
        <dbReference type="ChEBI" id="CHEBI:43474"/>
        <dbReference type="ChEBI" id="CHEBI:456216"/>
        <dbReference type="EC" id="5.6.2.4"/>
    </reaction>
</comment>
<comment type="subunit">
    <text evidence="1">Component of the 7-subunit TFIIH core complex composed of haywire/XPB/ERCC3, XPD/ERCC2, GTF2H1, GTF2H2, GTF2H3, GTF2H4 and GTF2H5, which is active in NER. The core complex associates with the 3-subunit CDK-activating kinase (CAK) module composed of CCNH/cyclin H, CDK7 and MNAT1 to form the 10-subunit holoenzyme (holo-TFIIH) active in transcription. Interacts with PUF60. Interacts with ATF7IP. Interacts with Epstein-Barr virus EBNA2.</text>
</comment>
<comment type="interaction">
    <interactant intactId="EBI-74952">
        <id>Q02870</id>
    </interactant>
    <interactant intactId="EBI-74922">
        <id>O96757</id>
        <label>stumps</label>
    </interactant>
    <organismsDiffer>false</organismsDiffer>
    <experiments>4</experiments>
</comment>
<comment type="subcellular location">
    <subcellularLocation>
        <location>Nucleus</location>
    </subcellularLocation>
</comment>
<comment type="similarity">
    <text evidence="6">Belongs to the helicase family. RAD25/XPB subfamily.</text>
</comment>
<proteinExistence type="evidence at protein level"/>
<name>ERCC3_DROME</name>
<dbReference type="EC" id="5.6.2.4" evidence="6"/>
<dbReference type="EMBL" id="S50517">
    <property type="protein sequence ID" value="AAA12421.1"/>
    <property type="molecule type" value="mRNA"/>
</dbReference>
<dbReference type="EMBL" id="X68309">
    <property type="protein sequence ID" value="CAA48386.1"/>
    <property type="molecule type" value="mRNA"/>
</dbReference>
<dbReference type="EMBL" id="L02965">
    <property type="protein sequence ID" value="AAA74931.1"/>
    <property type="molecule type" value="mRNA"/>
</dbReference>
<dbReference type="EMBL" id="AE014296">
    <property type="protein sequence ID" value="AAF50150.1"/>
    <property type="molecule type" value="Genomic_DNA"/>
</dbReference>
<dbReference type="EMBL" id="AY051975">
    <property type="protein sequence ID" value="AAK93399.1"/>
    <property type="molecule type" value="mRNA"/>
</dbReference>
<dbReference type="EMBL" id="BT025199">
    <property type="protein sequence ID" value="ABF17890.1"/>
    <property type="molecule type" value="mRNA"/>
</dbReference>
<dbReference type="PIR" id="A44223">
    <property type="entry name" value="A44223"/>
</dbReference>
<dbReference type="RefSeq" id="NP_001137931.1">
    <property type="nucleotide sequence ID" value="NM_001144459.2"/>
</dbReference>
<dbReference type="RefSeq" id="NP_524020.2">
    <property type="nucleotide sequence ID" value="NM_079296.4"/>
</dbReference>
<dbReference type="SMR" id="Q02870"/>
<dbReference type="BioGRID" id="64581">
    <property type="interactions" value="11"/>
</dbReference>
<dbReference type="ComplexPortal" id="CPX-2258">
    <property type="entry name" value="General transcription factor TFIIH complex"/>
</dbReference>
<dbReference type="FunCoup" id="Q02870">
    <property type="interactions" value="2299"/>
</dbReference>
<dbReference type="IntAct" id="Q02870">
    <property type="interactions" value="1"/>
</dbReference>
<dbReference type="STRING" id="7227.FBpp0075982"/>
<dbReference type="PaxDb" id="7227-FBpp0075982"/>
<dbReference type="DNASU" id="39202"/>
<dbReference type="EnsemblMetazoa" id="FBtr0076253">
    <property type="protein sequence ID" value="FBpp0075982"/>
    <property type="gene ID" value="FBgn0001179"/>
</dbReference>
<dbReference type="EnsemblMetazoa" id="FBtr0114599">
    <property type="protein sequence ID" value="FBpp0113091"/>
    <property type="gene ID" value="FBgn0001179"/>
</dbReference>
<dbReference type="GeneID" id="39202"/>
<dbReference type="KEGG" id="dme:Dmel_CG8019"/>
<dbReference type="UCSC" id="CG8019-RA">
    <property type="organism name" value="d. melanogaster"/>
</dbReference>
<dbReference type="AGR" id="FB:FBgn0001179"/>
<dbReference type="CTD" id="39202"/>
<dbReference type="FlyBase" id="FBgn0001179">
    <property type="gene designation" value="hay"/>
</dbReference>
<dbReference type="VEuPathDB" id="VectorBase:FBgn0001179"/>
<dbReference type="eggNOG" id="KOG1123">
    <property type="taxonomic scope" value="Eukaryota"/>
</dbReference>
<dbReference type="GeneTree" id="ENSGT00390000002204"/>
<dbReference type="HOGENOM" id="CLU_008213_0_0_1"/>
<dbReference type="InParanoid" id="Q02870"/>
<dbReference type="OMA" id="RCQEIDY"/>
<dbReference type="OrthoDB" id="10262986at2759"/>
<dbReference type="PhylomeDB" id="Q02870"/>
<dbReference type="Reactome" id="R-DME-112382">
    <property type="pathway name" value="Formation of RNA Pol II elongation complex"/>
</dbReference>
<dbReference type="Reactome" id="R-DME-113418">
    <property type="pathway name" value="Formation of the Early Elongation Complex"/>
</dbReference>
<dbReference type="Reactome" id="R-DME-5696395">
    <property type="pathway name" value="Formation of Incision Complex in GG-NER"/>
</dbReference>
<dbReference type="Reactome" id="R-DME-5696400">
    <property type="pathway name" value="Dual Incision in GG-NER"/>
</dbReference>
<dbReference type="Reactome" id="R-DME-674695">
    <property type="pathway name" value="RNA Polymerase II Pre-transcription Events"/>
</dbReference>
<dbReference type="Reactome" id="R-DME-6781823">
    <property type="pathway name" value="Formation of TC-NER Pre-Incision Complex"/>
</dbReference>
<dbReference type="Reactome" id="R-DME-6782135">
    <property type="pathway name" value="Dual incision in TC-NER"/>
</dbReference>
<dbReference type="Reactome" id="R-DME-6782210">
    <property type="pathway name" value="Gap-filling DNA repair synthesis and ligation in TC-NER"/>
</dbReference>
<dbReference type="Reactome" id="R-DME-6796648">
    <property type="pathway name" value="TP53 Regulates Transcription of DNA Repair Genes"/>
</dbReference>
<dbReference type="Reactome" id="R-DME-72086">
    <property type="pathway name" value="mRNA Capping"/>
</dbReference>
<dbReference type="Reactome" id="R-DME-73772">
    <property type="pathway name" value="RNA Polymerase I Promoter Escape"/>
</dbReference>
<dbReference type="Reactome" id="R-DME-73776">
    <property type="pathway name" value="RNA Polymerase II Promoter Escape"/>
</dbReference>
<dbReference type="Reactome" id="R-DME-73779">
    <property type="pathway name" value="RNA Polymerase II Transcription Pre-Initiation And Promoter Opening"/>
</dbReference>
<dbReference type="Reactome" id="R-DME-75953">
    <property type="pathway name" value="RNA Polymerase II Transcription Initiation"/>
</dbReference>
<dbReference type="Reactome" id="R-DME-75955">
    <property type="pathway name" value="RNA Polymerase II Transcription Elongation"/>
</dbReference>
<dbReference type="Reactome" id="R-DME-76042">
    <property type="pathway name" value="RNA Polymerase II Transcription Initiation And Promoter Clearance"/>
</dbReference>
<dbReference type="Reactome" id="R-DME-77075">
    <property type="pathway name" value="RNA Pol II CTD phosphorylation and interaction with CE"/>
</dbReference>
<dbReference type="BioGRID-ORCS" id="39202">
    <property type="hits" value="0 hits in 1 CRISPR screen"/>
</dbReference>
<dbReference type="GenomeRNAi" id="39202"/>
<dbReference type="PRO" id="PR:Q02870"/>
<dbReference type="Proteomes" id="UP000000803">
    <property type="component" value="Chromosome 3L"/>
</dbReference>
<dbReference type="Bgee" id="FBgn0001179">
    <property type="expression patterns" value="Expressed in eye disc (Drosophila) and 35 other cell types or tissues"/>
</dbReference>
<dbReference type="ExpressionAtlas" id="Q02870">
    <property type="expression patterns" value="baseline and differential"/>
</dbReference>
<dbReference type="GO" id="GO:0000112">
    <property type="term" value="C:nucleotide-excision repair factor 3 complex"/>
    <property type="evidence" value="ECO:0000318"/>
    <property type="project" value="GO_Central"/>
</dbReference>
<dbReference type="GO" id="GO:0005634">
    <property type="term" value="C:nucleus"/>
    <property type="evidence" value="ECO:0000314"/>
    <property type="project" value="FlyBase"/>
</dbReference>
<dbReference type="GO" id="GO:0005675">
    <property type="term" value="C:transcription factor TFIIH holo complex"/>
    <property type="evidence" value="ECO:0000314"/>
    <property type="project" value="FlyBase"/>
</dbReference>
<dbReference type="GO" id="GO:0097550">
    <property type="term" value="C:transcription preinitiation complex"/>
    <property type="evidence" value="ECO:0000318"/>
    <property type="project" value="GO_Central"/>
</dbReference>
<dbReference type="GO" id="GO:0043138">
    <property type="term" value="F:3'-5' DNA helicase activity"/>
    <property type="evidence" value="ECO:0000250"/>
    <property type="project" value="FlyBase"/>
</dbReference>
<dbReference type="GO" id="GO:0005524">
    <property type="term" value="F:ATP binding"/>
    <property type="evidence" value="ECO:0007669"/>
    <property type="project" value="UniProtKB-KW"/>
</dbReference>
<dbReference type="GO" id="GO:0016887">
    <property type="term" value="F:ATP hydrolysis activity"/>
    <property type="evidence" value="ECO:0007669"/>
    <property type="project" value="RHEA"/>
</dbReference>
<dbReference type="GO" id="GO:0003677">
    <property type="term" value="F:DNA binding"/>
    <property type="evidence" value="ECO:0007669"/>
    <property type="project" value="UniProtKB-KW"/>
</dbReference>
<dbReference type="GO" id="GO:0004386">
    <property type="term" value="F:helicase activity"/>
    <property type="evidence" value="ECO:0000250"/>
    <property type="project" value="FlyBase"/>
</dbReference>
<dbReference type="GO" id="GO:0006289">
    <property type="term" value="P:nucleotide-excision repair"/>
    <property type="evidence" value="ECO:0000250"/>
    <property type="project" value="FlyBase"/>
</dbReference>
<dbReference type="GO" id="GO:0009411">
    <property type="term" value="P:response to UV"/>
    <property type="evidence" value="ECO:0000315"/>
    <property type="project" value="FlyBase"/>
</dbReference>
<dbReference type="GO" id="GO:0001111">
    <property type="term" value="P:RNA polymerase II promoter clearance"/>
    <property type="evidence" value="ECO:0000250"/>
    <property type="project" value="FlyBase"/>
</dbReference>
<dbReference type="GO" id="GO:0006366">
    <property type="term" value="P:transcription by RNA polymerase II"/>
    <property type="evidence" value="ECO:0000315"/>
    <property type="project" value="FlyBase"/>
</dbReference>
<dbReference type="GO" id="GO:0006367">
    <property type="term" value="P:transcription initiation at RNA polymerase II promoter"/>
    <property type="evidence" value="ECO:0000316"/>
    <property type="project" value="FlyBase"/>
</dbReference>
<dbReference type="GO" id="GO:0001113">
    <property type="term" value="P:transcription open complex formation at RNA polymerase II promoter"/>
    <property type="evidence" value="ECO:0000250"/>
    <property type="project" value="FlyBase"/>
</dbReference>
<dbReference type="CDD" id="cd18029">
    <property type="entry name" value="DEXHc_XPB"/>
    <property type="match status" value="1"/>
</dbReference>
<dbReference type="CDD" id="cd18789">
    <property type="entry name" value="SF2_C_XPB"/>
    <property type="match status" value="1"/>
</dbReference>
<dbReference type="FunFam" id="3.40.50.300:FF:000077">
    <property type="entry name" value="Probable DNA repair helicase RAD25"/>
    <property type="match status" value="1"/>
</dbReference>
<dbReference type="FunFam" id="3.40.50.300:FF:000117">
    <property type="entry name" value="Putative DNA repair helicase rad25"/>
    <property type="match status" value="1"/>
</dbReference>
<dbReference type="Gene3D" id="3.40.50.300">
    <property type="entry name" value="P-loop containing nucleotide triphosphate hydrolases"/>
    <property type="match status" value="2"/>
</dbReference>
<dbReference type="InterPro" id="IPR050615">
    <property type="entry name" value="ATP-dep_DNA_Helicase"/>
</dbReference>
<dbReference type="InterPro" id="IPR032438">
    <property type="entry name" value="ERCC3_RAD25_C"/>
</dbReference>
<dbReference type="InterPro" id="IPR006935">
    <property type="entry name" value="Helicase/UvrB_N"/>
</dbReference>
<dbReference type="InterPro" id="IPR014001">
    <property type="entry name" value="Helicase_ATP-bd"/>
</dbReference>
<dbReference type="InterPro" id="IPR001650">
    <property type="entry name" value="Helicase_C-like"/>
</dbReference>
<dbReference type="InterPro" id="IPR027417">
    <property type="entry name" value="P-loop_NTPase"/>
</dbReference>
<dbReference type="InterPro" id="IPR001161">
    <property type="entry name" value="XPB/Ssl2"/>
</dbReference>
<dbReference type="InterPro" id="IPR032830">
    <property type="entry name" value="XPB/Ssl2_N"/>
</dbReference>
<dbReference type="NCBIfam" id="TIGR00603">
    <property type="entry name" value="rad25"/>
    <property type="match status" value="1"/>
</dbReference>
<dbReference type="PANTHER" id="PTHR11274:SF0">
    <property type="entry name" value="GENERAL TRANSCRIPTION AND DNA REPAIR FACTOR IIH HELICASE SUBUNIT XPB"/>
    <property type="match status" value="1"/>
</dbReference>
<dbReference type="PANTHER" id="PTHR11274">
    <property type="entry name" value="RAD25/XP-B DNA REPAIR HELICASE"/>
    <property type="match status" value="1"/>
</dbReference>
<dbReference type="Pfam" id="PF16203">
    <property type="entry name" value="ERCC3_RAD25_C"/>
    <property type="match status" value="1"/>
</dbReference>
<dbReference type="Pfam" id="PF13625">
    <property type="entry name" value="Helicase_C_3"/>
    <property type="match status" value="1"/>
</dbReference>
<dbReference type="Pfam" id="PF04851">
    <property type="entry name" value="ResIII"/>
    <property type="match status" value="1"/>
</dbReference>
<dbReference type="PRINTS" id="PR00851">
    <property type="entry name" value="XRODRMPGMNTB"/>
</dbReference>
<dbReference type="SMART" id="SM00487">
    <property type="entry name" value="DEXDc"/>
    <property type="match status" value="1"/>
</dbReference>
<dbReference type="SMART" id="SM00490">
    <property type="entry name" value="HELICc"/>
    <property type="match status" value="1"/>
</dbReference>
<dbReference type="SUPFAM" id="SSF52540">
    <property type="entry name" value="P-loop containing nucleoside triphosphate hydrolases"/>
    <property type="match status" value="2"/>
</dbReference>
<dbReference type="PROSITE" id="PS51192">
    <property type="entry name" value="HELICASE_ATP_BIND_1"/>
    <property type="match status" value="1"/>
</dbReference>
<dbReference type="PROSITE" id="PS51194">
    <property type="entry name" value="HELICASE_CTER"/>
    <property type="match status" value="1"/>
</dbReference>
<reference key="1">
    <citation type="journal article" date="1992" name="Nucleic Acids Res.">
        <title>Cloning and characterization of the Drosophila homolog of the Xeroderma pigmentosum complementation-group B correcting gene, ERCC3.</title>
        <authorList>
            <person name="Koken M.H."/>
            <person name="Vreeken C."/>
            <person name="Bol S.A."/>
            <person name="Cheng N.C."/>
            <person name="Jaspers-Dekker I."/>
            <person name="Hoeijmakers J.H."/>
            <person name="Eeken J.C."/>
            <person name="Weeda G."/>
            <person name="Pastink A."/>
        </authorList>
    </citation>
    <scope>NUCLEOTIDE SEQUENCE [MRNA]</scope>
</reference>
<reference key="2">
    <citation type="journal article" date="1992" name="Cell">
        <title>A Drosophila model for Xeroderma pigmentosum and Cockayne's syndrome: haywire encodes the fly homolog of ERCC3, a human excision repair gene.</title>
        <authorList>
            <person name="Mounkes L.C."/>
            <person name="Jones R.S."/>
            <person name="Liang B.-C."/>
            <person name="Gelbart W.M."/>
            <person name="Fuller M.T."/>
        </authorList>
    </citation>
    <scope>NUCLEOTIDE SEQUENCE [MRNA]</scope>
    <source>
        <tissue>Embryo</tissue>
    </source>
</reference>
<reference key="3">
    <citation type="journal article" date="2000" name="Science">
        <title>The genome sequence of Drosophila melanogaster.</title>
        <authorList>
            <person name="Adams M.D."/>
            <person name="Celniker S.E."/>
            <person name="Holt R.A."/>
            <person name="Evans C.A."/>
            <person name="Gocayne J.D."/>
            <person name="Amanatides P.G."/>
            <person name="Scherer S.E."/>
            <person name="Li P.W."/>
            <person name="Hoskins R.A."/>
            <person name="Galle R.F."/>
            <person name="George R.A."/>
            <person name="Lewis S.E."/>
            <person name="Richards S."/>
            <person name="Ashburner M."/>
            <person name="Henderson S.N."/>
            <person name="Sutton G.G."/>
            <person name="Wortman J.R."/>
            <person name="Yandell M.D."/>
            <person name="Zhang Q."/>
            <person name="Chen L.X."/>
            <person name="Brandon R.C."/>
            <person name="Rogers Y.-H.C."/>
            <person name="Blazej R.G."/>
            <person name="Champe M."/>
            <person name="Pfeiffer B.D."/>
            <person name="Wan K.H."/>
            <person name="Doyle C."/>
            <person name="Baxter E.G."/>
            <person name="Helt G."/>
            <person name="Nelson C.R."/>
            <person name="Miklos G.L.G."/>
            <person name="Abril J.F."/>
            <person name="Agbayani A."/>
            <person name="An H.-J."/>
            <person name="Andrews-Pfannkoch C."/>
            <person name="Baldwin D."/>
            <person name="Ballew R.M."/>
            <person name="Basu A."/>
            <person name="Baxendale J."/>
            <person name="Bayraktaroglu L."/>
            <person name="Beasley E.M."/>
            <person name="Beeson K.Y."/>
            <person name="Benos P.V."/>
            <person name="Berman B.P."/>
            <person name="Bhandari D."/>
            <person name="Bolshakov S."/>
            <person name="Borkova D."/>
            <person name="Botchan M.R."/>
            <person name="Bouck J."/>
            <person name="Brokstein P."/>
            <person name="Brottier P."/>
            <person name="Burtis K.C."/>
            <person name="Busam D.A."/>
            <person name="Butler H."/>
            <person name="Cadieu E."/>
            <person name="Center A."/>
            <person name="Chandra I."/>
            <person name="Cherry J.M."/>
            <person name="Cawley S."/>
            <person name="Dahlke C."/>
            <person name="Davenport L.B."/>
            <person name="Davies P."/>
            <person name="de Pablos B."/>
            <person name="Delcher A."/>
            <person name="Deng Z."/>
            <person name="Mays A.D."/>
            <person name="Dew I."/>
            <person name="Dietz S.M."/>
            <person name="Dodson K."/>
            <person name="Doup L.E."/>
            <person name="Downes M."/>
            <person name="Dugan-Rocha S."/>
            <person name="Dunkov B.C."/>
            <person name="Dunn P."/>
            <person name="Durbin K.J."/>
            <person name="Evangelista C.C."/>
            <person name="Ferraz C."/>
            <person name="Ferriera S."/>
            <person name="Fleischmann W."/>
            <person name="Fosler C."/>
            <person name="Gabrielian A.E."/>
            <person name="Garg N.S."/>
            <person name="Gelbart W.M."/>
            <person name="Glasser K."/>
            <person name="Glodek A."/>
            <person name="Gong F."/>
            <person name="Gorrell J.H."/>
            <person name="Gu Z."/>
            <person name="Guan P."/>
            <person name="Harris M."/>
            <person name="Harris N.L."/>
            <person name="Harvey D.A."/>
            <person name="Heiman T.J."/>
            <person name="Hernandez J.R."/>
            <person name="Houck J."/>
            <person name="Hostin D."/>
            <person name="Houston K.A."/>
            <person name="Howland T.J."/>
            <person name="Wei M.-H."/>
            <person name="Ibegwam C."/>
            <person name="Jalali M."/>
            <person name="Kalush F."/>
            <person name="Karpen G.H."/>
            <person name="Ke Z."/>
            <person name="Kennison J.A."/>
            <person name="Ketchum K.A."/>
            <person name="Kimmel B.E."/>
            <person name="Kodira C.D."/>
            <person name="Kraft C.L."/>
            <person name="Kravitz S."/>
            <person name="Kulp D."/>
            <person name="Lai Z."/>
            <person name="Lasko P."/>
            <person name="Lei Y."/>
            <person name="Levitsky A.A."/>
            <person name="Li J.H."/>
            <person name="Li Z."/>
            <person name="Liang Y."/>
            <person name="Lin X."/>
            <person name="Liu X."/>
            <person name="Mattei B."/>
            <person name="McIntosh T.C."/>
            <person name="McLeod M.P."/>
            <person name="McPherson D."/>
            <person name="Merkulov G."/>
            <person name="Milshina N.V."/>
            <person name="Mobarry C."/>
            <person name="Morris J."/>
            <person name="Moshrefi A."/>
            <person name="Mount S.M."/>
            <person name="Moy M."/>
            <person name="Murphy B."/>
            <person name="Murphy L."/>
            <person name="Muzny D.M."/>
            <person name="Nelson D.L."/>
            <person name="Nelson D.R."/>
            <person name="Nelson K.A."/>
            <person name="Nixon K."/>
            <person name="Nusskern D.R."/>
            <person name="Pacleb J.M."/>
            <person name="Palazzolo M."/>
            <person name="Pittman G.S."/>
            <person name="Pan S."/>
            <person name="Pollard J."/>
            <person name="Puri V."/>
            <person name="Reese M.G."/>
            <person name="Reinert K."/>
            <person name="Remington K."/>
            <person name="Saunders R.D.C."/>
            <person name="Scheeler F."/>
            <person name="Shen H."/>
            <person name="Shue B.C."/>
            <person name="Siden-Kiamos I."/>
            <person name="Simpson M."/>
            <person name="Skupski M.P."/>
            <person name="Smith T.J."/>
            <person name="Spier E."/>
            <person name="Spradling A.C."/>
            <person name="Stapleton M."/>
            <person name="Strong R."/>
            <person name="Sun E."/>
            <person name="Svirskas R."/>
            <person name="Tector C."/>
            <person name="Turner R."/>
            <person name="Venter E."/>
            <person name="Wang A.H."/>
            <person name="Wang X."/>
            <person name="Wang Z.-Y."/>
            <person name="Wassarman D.A."/>
            <person name="Weinstock G.M."/>
            <person name="Weissenbach J."/>
            <person name="Williams S.M."/>
            <person name="Woodage T."/>
            <person name="Worley K.C."/>
            <person name="Wu D."/>
            <person name="Yang S."/>
            <person name="Yao Q.A."/>
            <person name="Ye J."/>
            <person name="Yeh R.-F."/>
            <person name="Zaveri J.S."/>
            <person name="Zhan M."/>
            <person name="Zhang G."/>
            <person name="Zhao Q."/>
            <person name="Zheng L."/>
            <person name="Zheng X.H."/>
            <person name="Zhong F.N."/>
            <person name="Zhong W."/>
            <person name="Zhou X."/>
            <person name="Zhu S.C."/>
            <person name="Zhu X."/>
            <person name="Smith H.O."/>
            <person name="Gibbs R.A."/>
            <person name="Myers E.W."/>
            <person name="Rubin G.M."/>
            <person name="Venter J.C."/>
        </authorList>
    </citation>
    <scope>NUCLEOTIDE SEQUENCE [LARGE SCALE GENOMIC DNA]</scope>
    <source>
        <strain>Berkeley</strain>
    </source>
</reference>
<reference key="4">
    <citation type="journal article" date="2002" name="Genome Biol.">
        <title>Annotation of the Drosophila melanogaster euchromatic genome: a systematic review.</title>
        <authorList>
            <person name="Misra S."/>
            <person name="Crosby M.A."/>
            <person name="Mungall C.J."/>
            <person name="Matthews B.B."/>
            <person name="Campbell K.S."/>
            <person name="Hradecky P."/>
            <person name="Huang Y."/>
            <person name="Kaminker J.S."/>
            <person name="Millburn G.H."/>
            <person name="Prochnik S.E."/>
            <person name="Smith C.D."/>
            <person name="Tupy J.L."/>
            <person name="Whitfield E.J."/>
            <person name="Bayraktaroglu L."/>
            <person name="Berman B.P."/>
            <person name="Bettencourt B.R."/>
            <person name="Celniker S.E."/>
            <person name="de Grey A.D.N.J."/>
            <person name="Drysdale R.A."/>
            <person name="Harris N.L."/>
            <person name="Richter J."/>
            <person name="Russo S."/>
            <person name="Schroeder A.J."/>
            <person name="Shu S.Q."/>
            <person name="Stapleton M."/>
            <person name="Yamada C."/>
            <person name="Ashburner M."/>
            <person name="Gelbart W.M."/>
            <person name="Rubin G.M."/>
            <person name="Lewis S.E."/>
        </authorList>
    </citation>
    <scope>GENOME REANNOTATION</scope>
    <source>
        <strain>Berkeley</strain>
    </source>
</reference>
<reference key="5">
    <citation type="journal article" date="2002" name="Genome Biol.">
        <title>A Drosophila full-length cDNA resource.</title>
        <authorList>
            <person name="Stapleton M."/>
            <person name="Carlson J.W."/>
            <person name="Brokstein P."/>
            <person name="Yu C."/>
            <person name="Champe M."/>
            <person name="George R.A."/>
            <person name="Guarin H."/>
            <person name="Kronmiller B."/>
            <person name="Pacleb J.M."/>
            <person name="Park S."/>
            <person name="Wan K.H."/>
            <person name="Rubin G.M."/>
            <person name="Celniker S.E."/>
        </authorList>
    </citation>
    <scope>NUCLEOTIDE SEQUENCE [LARGE SCALE MRNA]</scope>
    <source>
        <strain>Berkeley</strain>
        <tissue>Embryo</tissue>
    </source>
</reference>
<reference key="6">
    <citation type="submission" date="2006-10" db="EMBL/GenBank/DDBJ databases">
        <authorList>
            <person name="Stapleton M."/>
            <person name="Carlson J.W."/>
            <person name="Frise E."/>
            <person name="Kapadia B."/>
            <person name="Park S."/>
            <person name="Wan K.H."/>
            <person name="Yu C."/>
            <person name="Celniker S.E."/>
        </authorList>
    </citation>
    <scope>NUCLEOTIDE SEQUENCE [LARGE SCALE MRNA]</scope>
    <source>
        <strain>Berkeley</strain>
    </source>
</reference>